<protein>
    <recommendedName>
        <fullName evidence="1">tRNA-cytidine(32) 2-sulfurtransferase</fullName>
        <ecNumber evidence="1">2.8.1.-</ecNumber>
    </recommendedName>
    <alternativeName>
        <fullName evidence="1">Two-thiocytidine biosynthesis protein A</fullName>
    </alternativeName>
    <alternativeName>
        <fullName evidence="1">tRNA 2-thiocytidine biosynthesis protein TtcA</fullName>
    </alternativeName>
</protein>
<dbReference type="EC" id="2.8.1.-" evidence="1"/>
<dbReference type="EMBL" id="AE014299">
    <property type="protein sequence ID" value="AAN55388.1"/>
    <property type="molecule type" value="Genomic_DNA"/>
</dbReference>
<dbReference type="RefSeq" id="NP_717944.1">
    <property type="nucleotide sequence ID" value="NC_004347.2"/>
</dbReference>
<dbReference type="SMR" id="Q8EEM4"/>
<dbReference type="STRING" id="211586.SO_2354"/>
<dbReference type="PaxDb" id="211586-SO_2354"/>
<dbReference type="KEGG" id="son:SO_2354"/>
<dbReference type="PATRIC" id="fig|211586.12.peg.2265"/>
<dbReference type="eggNOG" id="COG0037">
    <property type="taxonomic scope" value="Bacteria"/>
</dbReference>
<dbReference type="HOGENOM" id="CLU_026481_0_0_6"/>
<dbReference type="OrthoDB" id="9801054at2"/>
<dbReference type="PhylomeDB" id="Q8EEM4"/>
<dbReference type="BioCyc" id="SONE211586:G1GMP-2152-MONOMER"/>
<dbReference type="Proteomes" id="UP000008186">
    <property type="component" value="Chromosome"/>
</dbReference>
<dbReference type="GO" id="GO:0005829">
    <property type="term" value="C:cytosol"/>
    <property type="evidence" value="ECO:0000318"/>
    <property type="project" value="GO_Central"/>
</dbReference>
<dbReference type="GO" id="GO:0051539">
    <property type="term" value="F:4 iron, 4 sulfur cluster binding"/>
    <property type="evidence" value="ECO:0007669"/>
    <property type="project" value="UniProtKB-UniRule"/>
</dbReference>
<dbReference type="GO" id="GO:0005524">
    <property type="term" value="F:ATP binding"/>
    <property type="evidence" value="ECO:0007669"/>
    <property type="project" value="UniProtKB-UniRule"/>
</dbReference>
<dbReference type="GO" id="GO:0000287">
    <property type="term" value="F:magnesium ion binding"/>
    <property type="evidence" value="ECO:0007669"/>
    <property type="project" value="UniProtKB-UniRule"/>
</dbReference>
<dbReference type="GO" id="GO:0016783">
    <property type="term" value="F:sulfurtransferase activity"/>
    <property type="evidence" value="ECO:0000318"/>
    <property type="project" value="GO_Central"/>
</dbReference>
<dbReference type="GO" id="GO:0000049">
    <property type="term" value="F:tRNA binding"/>
    <property type="evidence" value="ECO:0007669"/>
    <property type="project" value="UniProtKB-KW"/>
</dbReference>
<dbReference type="GO" id="GO:0034227">
    <property type="term" value="P:tRNA thio-modification"/>
    <property type="evidence" value="ECO:0000318"/>
    <property type="project" value="GO_Central"/>
</dbReference>
<dbReference type="CDD" id="cd24138">
    <property type="entry name" value="TtcA-like"/>
    <property type="match status" value="1"/>
</dbReference>
<dbReference type="Gene3D" id="3.40.50.620">
    <property type="entry name" value="HUPs"/>
    <property type="match status" value="1"/>
</dbReference>
<dbReference type="HAMAP" id="MF_01850">
    <property type="entry name" value="TtcA"/>
    <property type="match status" value="1"/>
</dbReference>
<dbReference type="InterPro" id="IPR014729">
    <property type="entry name" value="Rossmann-like_a/b/a_fold"/>
</dbReference>
<dbReference type="InterPro" id="IPR011063">
    <property type="entry name" value="TilS/TtcA_N"/>
</dbReference>
<dbReference type="InterPro" id="IPR012089">
    <property type="entry name" value="tRNA_Cyd_32_2_STrfase"/>
</dbReference>
<dbReference type="InterPro" id="IPR035107">
    <property type="entry name" value="tRNA_thiolation_TtcA_Ctu1"/>
</dbReference>
<dbReference type="NCBIfam" id="NF007972">
    <property type="entry name" value="PRK10696.1"/>
    <property type="match status" value="1"/>
</dbReference>
<dbReference type="PANTHER" id="PTHR43686:SF1">
    <property type="entry name" value="AMINOTRAN_5 DOMAIN-CONTAINING PROTEIN"/>
    <property type="match status" value="1"/>
</dbReference>
<dbReference type="PANTHER" id="PTHR43686">
    <property type="entry name" value="SULFURTRANSFERASE-RELATED"/>
    <property type="match status" value="1"/>
</dbReference>
<dbReference type="Pfam" id="PF01171">
    <property type="entry name" value="ATP_bind_3"/>
    <property type="match status" value="1"/>
</dbReference>
<dbReference type="PIRSF" id="PIRSF004976">
    <property type="entry name" value="ATPase_YdaO"/>
    <property type="match status" value="1"/>
</dbReference>
<dbReference type="SUPFAM" id="SSF52402">
    <property type="entry name" value="Adenine nucleotide alpha hydrolases-like"/>
    <property type="match status" value="1"/>
</dbReference>
<comment type="function">
    <text evidence="1">Catalyzes the ATP-dependent 2-thiolation of cytidine in position 32 of tRNA, to form 2-thiocytidine (s(2)C32). The sulfur atoms are provided by the cysteine/cysteine desulfurase (IscS) system.</text>
</comment>
<comment type="catalytic activity">
    <reaction evidence="1">
        <text>cytidine(32) in tRNA + S-sulfanyl-L-cysteinyl-[cysteine desulfurase] + AH2 + ATP = 2-thiocytidine(32) in tRNA + L-cysteinyl-[cysteine desulfurase] + A + AMP + diphosphate + H(+)</text>
        <dbReference type="Rhea" id="RHEA:57048"/>
        <dbReference type="Rhea" id="RHEA-COMP:10288"/>
        <dbReference type="Rhea" id="RHEA-COMP:12157"/>
        <dbReference type="Rhea" id="RHEA-COMP:12158"/>
        <dbReference type="Rhea" id="RHEA-COMP:14821"/>
        <dbReference type="ChEBI" id="CHEBI:13193"/>
        <dbReference type="ChEBI" id="CHEBI:15378"/>
        <dbReference type="ChEBI" id="CHEBI:17499"/>
        <dbReference type="ChEBI" id="CHEBI:29950"/>
        <dbReference type="ChEBI" id="CHEBI:30616"/>
        <dbReference type="ChEBI" id="CHEBI:33019"/>
        <dbReference type="ChEBI" id="CHEBI:61963"/>
        <dbReference type="ChEBI" id="CHEBI:82748"/>
        <dbReference type="ChEBI" id="CHEBI:141453"/>
        <dbReference type="ChEBI" id="CHEBI:456215"/>
    </reaction>
    <physiologicalReaction direction="left-to-right" evidence="1">
        <dbReference type="Rhea" id="RHEA:57049"/>
    </physiologicalReaction>
</comment>
<comment type="cofactor">
    <cofactor evidence="1">
        <name>Mg(2+)</name>
        <dbReference type="ChEBI" id="CHEBI:18420"/>
    </cofactor>
</comment>
<comment type="cofactor">
    <cofactor evidence="1">
        <name>[4Fe-4S] cluster</name>
        <dbReference type="ChEBI" id="CHEBI:49883"/>
    </cofactor>
    <text evidence="1">Binds 1 [4Fe-4S] cluster per subunit. The cluster is chelated by three Cys residues, the fourth Fe has a free coordination site that may bind a sulfur atom transferred from the persulfide of IscS.</text>
</comment>
<comment type="pathway">
    <text evidence="1">tRNA modification.</text>
</comment>
<comment type="subunit">
    <text evidence="1">Homodimer.</text>
</comment>
<comment type="subcellular location">
    <subcellularLocation>
        <location evidence="1">Cytoplasm</location>
    </subcellularLocation>
</comment>
<comment type="miscellaneous">
    <text evidence="1">The thiolation reaction likely consists of two steps: a first activation step by ATP to form an adenylated intermediate of the target base of tRNA, and a second nucleophilic substitution step of the sulfur (S) atom supplied by the hydrosulfide attached to the Fe-S cluster.</text>
</comment>
<comment type="similarity">
    <text evidence="1">Belongs to the TtcA family.</text>
</comment>
<name>TTCA_SHEON</name>
<keyword id="KW-0004">4Fe-4S</keyword>
<keyword id="KW-0067">ATP-binding</keyword>
<keyword id="KW-0963">Cytoplasm</keyword>
<keyword id="KW-0408">Iron</keyword>
<keyword id="KW-0411">Iron-sulfur</keyword>
<keyword id="KW-0460">Magnesium</keyword>
<keyword id="KW-0479">Metal-binding</keyword>
<keyword id="KW-0547">Nucleotide-binding</keyword>
<keyword id="KW-1185">Reference proteome</keyword>
<keyword id="KW-0694">RNA-binding</keyword>
<keyword id="KW-0808">Transferase</keyword>
<keyword id="KW-0819">tRNA processing</keyword>
<keyword id="KW-0820">tRNA-binding</keyword>
<sequence>MPEELSKKQTTRLNKLQKRLRREVGSAIADYNMIEDGDRVMCCLSGGKDSYAMLDILLNLQQRAPVQFEIIAVNLDQKQPGFPEDVLPAYLDSLNVPYHILEKDTYSIVKEKIPEGKTTCSLCSRLRRGTLYGFAQRIGATKIALGHHRDDIIETLFLNMFFGGKMKAMPPKLLSDDGANVVIRPLAYCREKDLEEYAELKKFPIIPCNLCGSQENLKRQAVKDMLNQWNRQFPGRIETIFTAMQNTAPSQGVDREQFDFVSLKRDPDAPMKGDVAEANLPAFDFLDIANSGHIDLDAAKRIDIVNVYEV</sequence>
<reference key="1">
    <citation type="journal article" date="2002" name="Nat. Biotechnol.">
        <title>Genome sequence of the dissimilatory metal ion-reducing bacterium Shewanella oneidensis.</title>
        <authorList>
            <person name="Heidelberg J.F."/>
            <person name="Paulsen I.T."/>
            <person name="Nelson K.E."/>
            <person name="Gaidos E.J."/>
            <person name="Nelson W.C."/>
            <person name="Read T.D."/>
            <person name="Eisen J.A."/>
            <person name="Seshadri R."/>
            <person name="Ward N.L."/>
            <person name="Methe B.A."/>
            <person name="Clayton R.A."/>
            <person name="Meyer T."/>
            <person name="Tsapin A."/>
            <person name="Scott J."/>
            <person name="Beanan M.J."/>
            <person name="Brinkac L.M."/>
            <person name="Daugherty S.C."/>
            <person name="DeBoy R.T."/>
            <person name="Dodson R.J."/>
            <person name="Durkin A.S."/>
            <person name="Haft D.H."/>
            <person name="Kolonay J.F."/>
            <person name="Madupu R."/>
            <person name="Peterson J.D."/>
            <person name="Umayam L.A."/>
            <person name="White O."/>
            <person name="Wolf A.M."/>
            <person name="Vamathevan J.J."/>
            <person name="Weidman J.F."/>
            <person name="Impraim M."/>
            <person name="Lee K."/>
            <person name="Berry K.J."/>
            <person name="Lee C."/>
            <person name="Mueller J."/>
            <person name="Khouri H.M."/>
            <person name="Gill J."/>
            <person name="Utterback T.R."/>
            <person name="McDonald L.A."/>
            <person name="Feldblyum T.V."/>
            <person name="Smith H.O."/>
            <person name="Venter J.C."/>
            <person name="Nealson K.H."/>
            <person name="Fraser C.M."/>
        </authorList>
    </citation>
    <scope>NUCLEOTIDE SEQUENCE [LARGE SCALE GENOMIC DNA]</scope>
    <source>
        <strain>ATCC 700550 / JCM 31522 / CIP 106686 / LMG 19005 / NCIMB 14063 / MR-1</strain>
    </source>
</reference>
<organism>
    <name type="scientific">Shewanella oneidensis (strain ATCC 700550 / JCM 31522 / CIP 106686 / LMG 19005 / NCIMB 14063 / MR-1)</name>
    <dbReference type="NCBI Taxonomy" id="211586"/>
    <lineage>
        <taxon>Bacteria</taxon>
        <taxon>Pseudomonadati</taxon>
        <taxon>Pseudomonadota</taxon>
        <taxon>Gammaproteobacteria</taxon>
        <taxon>Alteromonadales</taxon>
        <taxon>Shewanellaceae</taxon>
        <taxon>Shewanella</taxon>
    </lineage>
</organism>
<accession>Q8EEM4</accession>
<gene>
    <name evidence="1" type="primary">ttcA</name>
    <name type="ordered locus">SO_2354</name>
</gene>
<proteinExistence type="inferred from homology"/>
<feature type="chain" id="PRO_0000348839" description="tRNA-cytidine(32) 2-sulfurtransferase">
    <location>
        <begin position="1"/>
        <end position="310"/>
    </location>
</feature>
<feature type="short sequence motif" description="PP-loop motif" evidence="1">
    <location>
        <begin position="45"/>
        <end position="50"/>
    </location>
</feature>
<feature type="binding site" evidence="1">
    <location>
        <position position="120"/>
    </location>
    <ligand>
        <name>[4Fe-4S] cluster</name>
        <dbReference type="ChEBI" id="CHEBI:49883"/>
    </ligand>
</feature>
<feature type="binding site" evidence="1">
    <location>
        <position position="123"/>
    </location>
    <ligand>
        <name>[4Fe-4S] cluster</name>
        <dbReference type="ChEBI" id="CHEBI:49883"/>
    </ligand>
</feature>
<feature type="binding site" evidence="1">
    <location>
        <position position="211"/>
    </location>
    <ligand>
        <name>[4Fe-4S] cluster</name>
        <dbReference type="ChEBI" id="CHEBI:49883"/>
    </ligand>
</feature>
<evidence type="ECO:0000255" key="1">
    <source>
        <dbReference type="HAMAP-Rule" id="MF_01850"/>
    </source>
</evidence>